<reference key="1">
    <citation type="submission" date="2009-01" db="EMBL/GenBank/DDBJ databases">
        <title>Complete sequence of Anaeromyxobacter dehalogenans 2CP-1.</title>
        <authorList>
            <person name="Lucas S."/>
            <person name="Copeland A."/>
            <person name="Lapidus A."/>
            <person name="Glavina del Rio T."/>
            <person name="Dalin E."/>
            <person name="Tice H."/>
            <person name="Bruce D."/>
            <person name="Goodwin L."/>
            <person name="Pitluck S."/>
            <person name="Saunders E."/>
            <person name="Brettin T."/>
            <person name="Detter J.C."/>
            <person name="Han C."/>
            <person name="Larimer F."/>
            <person name="Land M."/>
            <person name="Hauser L."/>
            <person name="Kyrpides N."/>
            <person name="Ovchinnikova G."/>
            <person name="Beliaev A.S."/>
            <person name="Richardson P."/>
        </authorList>
    </citation>
    <scope>NUCLEOTIDE SEQUENCE [LARGE SCALE GENOMIC DNA]</scope>
    <source>
        <strain>2CP-1 / ATCC BAA-258</strain>
    </source>
</reference>
<dbReference type="EMBL" id="CP001359">
    <property type="protein sequence ID" value="ACL65385.1"/>
    <property type="molecule type" value="Genomic_DNA"/>
</dbReference>
<dbReference type="RefSeq" id="WP_011420974.1">
    <property type="nucleotide sequence ID" value="NC_011891.1"/>
</dbReference>
<dbReference type="SMR" id="B8J886"/>
<dbReference type="KEGG" id="acp:A2cp1_2044"/>
<dbReference type="HOGENOM" id="CLU_092403_0_2_7"/>
<dbReference type="Proteomes" id="UP000007089">
    <property type="component" value="Chromosome"/>
</dbReference>
<dbReference type="GO" id="GO:0015935">
    <property type="term" value="C:small ribosomal subunit"/>
    <property type="evidence" value="ECO:0007669"/>
    <property type="project" value="InterPro"/>
</dbReference>
<dbReference type="GO" id="GO:0019843">
    <property type="term" value="F:rRNA binding"/>
    <property type="evidence" value="ECO:0007669"/>
    <property type="project" value="UniProtKB-UniRule"/>
</dbReference>
<dbReference type="GO" id="GO:0003735">
    <property type="term" value="F:structural constituent of ribosome"/>
    <property type="evidence" value="ECO:0007669"/>
    <property type="project" value="InterPro"/>
</dbReference>
<dbReference type="GO" id="GO:0042274">
    <property type="term" value="P:ribosomal small subunit biogenesis"/>
    <property type="evidence" value="ECO:0007669"/>
    <property type="project" value="TreeGrafter"/>
</dbReference>
<dbReference type="GO" id="GO:0006412">
    <property type="term" value="P:translation"/>
    <property type="evidence" value="ECO:0007669"/>
    <property type="project" value="UniProtKB-UniRule"/>
</dbReference>
<dbReference type="CDD" id="cd00165">
    <property type="entry name" value="S4"/>
    <property type="match status" value="1"/>
</dbReference>
<dbReference type="FunFam" id="1.10.1050.10:FF:000001">
    <property type="entry name" value="30S ribosomal protein S4"/>
    <property type="match status" value="1"/>
</dbReference>
<dbReference type="FunFam" id="3.10.290.10:FF:000001">
    <property type="entry name" value="30S ribosomal protein S4"/>
    <property type="match status" value="1"/>
</dbReference>
<dbReference type="Gene3D" id="1.10.1050.10">
    <property type="entry name" value="Ribosomal Protein S4 Delta 41, Chain A, domain 1"/>
    <property type="match status" value="1"/>
</dbReference>
<dbReference type="Gene3D" id="3.10.290.10">
    <property type="entry name" value="RNA-binding S4 domain"/>
    <property type="match status" value="1"/>
</dbReference>
<dbReference type="HAMAP" id="MF_01306_B">
    <property type="entry name" value="Ribosomal_uS4_B"/>
    <property type="match status" value="1"/>
</dbReference>
<dbReference type="InterPro" id="IPR022801">
    <property type="entry name" value="Ribosomal_uS4"/>
</dbReference>
<dbReference type="InterPro" id="IPR005709">
    <property type="entry name" value="Ribosomal_uS4_bac-type"/>
</dbReference>
<dbReference type="InterPro" id="IPR018079">
    <property type="entry name" value="Ribosomal_uS4_CS"/>
</dbReference>
<dbReference type="InterPro" id="IPR001912">
    <property type="entry name" value="Ribosomal_uS4_N"/>
</dbReference>
<dbReference type="InterPro" id="IPR002942">
    <property type="entry name" value="S4_RNA-bd"/>
</dbReference>
<dbReference type="InterPro" id="IPR036986">
    <property type="entry name" value="S4_RNA-bd_sf"/>
</dbReference>
<dbReference type="NCBIfam" id="NF003717">
    <property type="entry name" value="PRK05327.1"/>
    <property type="match status" value="1"/>
</dbReference>
<dbReference type="NCBIfam" id="TIGR01017">
    <property type="entry name" value="rpsD_bact"/>
    <property type="match status" value="1"/>
</dbReference>
<dbReference type="PANTHER" id="PTHR11831">
    <property type="entry name" value="30S 40S RIBOSOMAL PROTEIN"/>
    <property type="match status" value="1"/>
</dbReference>
<dbReference type="PANTHER" id="PTHR11831:SF4">
    <property type="entry name" value="SMALL RIBOSOMAL SUBUNIT PROTEIN US4M"/>
    <property type="match status" value="1"/>
</dbReference>
<dbReference type="Pfam" id="PF00163">
    <property type="entry name" value="Ribosomal_S4"/>
    <property type="match status" value="1"/>
</dbReference>
<dbReference type="Pfam" id="PF01479">
    <property type="entry name" value="S4"/>
    <property type="match status" value="1"/>
</dbReference>
<dbReference type="SMART" id="SM01390">
    <property type="entry name" value="Ribosomal_S4"/>
    <property type="match status" value="1"/>
</dbReference>
<dbReference type="SMART" id="SM00363">
    <property type="entry name" value="S4"/>
    <property type="match status" value="1"/>
</dbReference>
<dbReference type="SUPFAM" id="SSF55174">
    <property type="entry name" value="Alpha-L RNA-binding motif"/>
    <property type="match status" value="1"/>
</dbReference>
<dbReference type="PROSITE" id="PS00632">
    <property type="entry name" value="RIBOSOMAL_S4"/>
    <property type="match status" value="1"/>
</dbReference>
<dbReference type="PROSITE" id="PS50889">
    <property type="entry name" value="S4"/>
    <property type="match status" value="1"/>
</dbReference>
<gene>
    <name evidence="1" type="primary">rpsD</name>
    <name type="ordered locus">A2cp1_2044</name>
</gene>
<sequence length="208" mass="23903">MARYSESVCRLCRRENLKMYLKGDRCYTDKCAIERRPYPPGQHGQGRTKFSEYGVQLREKQKVKRMYGLLEAGFRHAYQNAAAAKGKTGENLLQTLELRLDNVVFRLGFADTRNEARQLVRHGHFKVNGRKVNIPSYLCRPGDKVELKDRSKKVVRITEALEAVDRRGVPAWLDLDKGGFKGTVKTSPAREDITMPIQEQLIVELYSK</sequence>
<organism>
    <name type="scientific">Anaeromyxobacter dehalogenans (strain 2CP-1 / ATCC BAA-258)</name>
    <dbReference type="NCBI Taxonomy" id="455488"/>
    <lineage>
        <taxon>Bacteria</taxon>
        <taxon>Pseudomonadati</taxon>
        <taxon>Myxococcota</taxon>
        <taxon>Myxococcia</taxon>
        <taxon>Myxococcales</taxon>
        <taxon>Cystobacterineae</taxon>
        <taxon>Anaeromyxobacteraceae</taxon>
        <taxon>Anaeromyxobacter</taxon>
    </lineage>
</organism>
<feature type="chain" id="PRO_1000165377" description="Small ribosomal subunit protein uS4">
    <location>
        <begin position="1"/>
        <end position="208"/>
    </location>
</feature>
<feature type="domain" description="S4 RNA-binding" evidence="1">
    <location>
        <begin position="98"/>
        <end position="159"/>
    </location>
</feature>
<comment type="function">
    <text evidence="1">One of the primary rRNA binding proteins, it binds directly to 16S rRNA where it nucleates assembly of the body of the 30S subunit.</text>
</comment>
<comment type="function">
    <text evidence="1">With S5 and S12 plays an important role in translational accuracy.</text>
</comment>
<comment type="subunit">
    <text evidence="1">Part of the 30S ribosomal subunit. Contacts protein S5. The interaction surface between S4 and S5 is involved in control of translational fidelity.</text>
</comment>
<comment type="similarity">
    <text evidence="1">Belongs to the universal ribosomal protein uS4 family.</text>
</comment>
<proteinExistence type="inferred from homology"/>
<name>RS4_ANAD2</name>
<protein>
    <recommendedName>
        <fullName evidence="1">Small ribosomal subunit protein uS4</fullName>
    </recommendedName>
    <alternativeName>
        <fullName evidence="2">30S ribosomal protein S4</fullName>
    </alternativeName>
</protein>
<accession>B8J886</accession>
<keyword id="KW-0687">Ribonucleoprotein</keyword>
<keyword id="KW-0689">Ribosomal protein</keyword>
<keyword id="KW-0694">RNA-binding</keyword>
<keyword id="KW-0699">rRNA-binding</keyword>
<evidence type="ECO:0000255" key="1">
    <source>
        <dbReference type="HAMAP-Rule" id="MF_01306"/>
    </source>
</evidence>
<evidence type="ECO:0000305" key="2"/>